<name>ATPF_RICPR</name>
<sequence length="167" mass="19475">MNFLDESFWLTISFVIFVYLIYRPAKKAILNALDTKISEIQEKVLKAKKLKEDAALLFEQTKLQIQKLETLRSQMIEESDKATKQIIQDKTKEMEEFLERKKADAIQLIQNQKSTASKDLQDEFCDEVITLVSKYFRSAKLSEKSIAKNLMDKSDFVHNDSKATYLH</sequence>
<reference key="1">
    <citation type="journal article" date="1998" name="Nature">
        <title>The genome sequence of Rickettsia prowazekii and the origin of mitochondria.</title>
        <authorList>
            <person name="Andersson S.G.E."/>
            <person name="Zomorodipour A."/>
            <person name="Andersson J.O."/>
            <person name="Sicheritz-Ponten T."/>
            <person name="Alsmark U.C.M."/>
            <person name="Podowski R.M."/>
            <person name="Naeslund A.K."/>
            <person name="Eriksson A.-S."/>
            <person name="Winkler H.H."/>
            <person name="Kurland C.G."/>
        </authorList>
    </citation>
    <scope>NUCLEOTIDE SEQUENCE [LARGE SCALE GENOMIC DNA]</scope>
    <source>
        <strain>Madrid E</strain>
    </source>
</reference>
<protein>
    <recommendedName>
        <fullName evidence="1">ATP synthase subunit b</fullName>
    </recommendedName>
    <alternativeName>
        <fullName evidence="1">ATP synthase F(0) sector subunit b</fullName>
    </alternativeName>
    <alternativeName>
        <fullName evidence="1">ATPase subunit I</fullName>
    </alternativeName>
    <alternativeName>
        <fullName evidence="1">F-type ATPase subunit b</fullName>
        <shortName evidence="1">F-ATPase subunit b</shortName>
    </alternativeName>
</protein>
<dbReference type="EMBL" id="AJ235270">
    <property type="protein sequence ID" value="CAA14491.1"/>
    <property type="molecule type" value="Genomic_DNA"/>
</dbReference>
<dbReference type="PIR" id="D71709">
    <property type="entry name" value="D71709"/>
</dbReference>
<dbReference type="RefSeq" id="NP_220414.1">
    <property type="nucleotide sequence ID" value="NC_000963.1"/>
</dbReference>
<dbReference type="RefSeq" id="WP_004596675.1">
    <property type="nucleotide sequence ID" value="NC_000963.1"/>
</dbReference>
<dbReference type="SMR" id="Q9ZEC4"/>
<dbReference type="STRING" id="272947.gene:17555103"/>
<dbReference type="EnsemblBacteria" id="CAA14491">
    <property type="protein sequence ID" value="CAA14491"/>
    <property type="gene ID" value="CAA14491"/>
</dbReference>
<dbReference type="KEGG" id="rpr:RP020"/>
<dbReference type="PATRIC" id="fig|272947.5.peg.20"/>
<dbReference type="eggNOG" id="COG0711">
    <property type="taxonomic scope" value="Bacteria"/>
</dbReference>
<dbReference type="HOGENOM" id="CLU_1676510_0_0_5"/>
<dbReference type="OrthoDB" id="7161077at2"/>
<dbReference type="Proteomes" id="UP000002480">
    <property type="component" value="Chromosome"/>
</dbReference>
<dbReference type="GO" id="GO:0005886">
    <property type="term" value="C:plasma membrane"/>
    <property type="evidence" value="ECO:0007669"/>
    <property type="project" value="UniProtKB-SubCell"/>
</dbReference>
<dbReference type="GO" id="GO:0045259">
    <property type="term" value="C:proton-transporting ATP synthase complex"/>
    <property type="evidence" value="ECO:0007669"/>
    <property type="project" value="UniProtKB-KW"/>
</dbReference>
<dbReference type="GO" id="GO:0046933">
    <property type="term" value="F:proton-transporting ATP synthase activity, rotational mechanism"/>
    <property type="evidence" value="ECO:0007669"/>
    <property type="project" value="UniProtKB-UniRule"/>
</dbReference>
<dbReference type="CDD" id="cd06503">
    <property type="entry name" value="ATP-synt_Fo_b"/>
    <property type="match status" value="1"/>
</dbReference>
<dbReference type="HAMAP" id="MF_01398">
    <property type="entry name" value="ATP_synth_b_bprime"/>
    <property type="match status" value="1"/>
</dbReference>
<dbReference type="InterPro" id="IPR002146">
    <property type="entry name" value="ATP_synth_b/b'su_bac/chlpt"/>
</dbReference>
<dbReference type="NCBIfam" id="NF005129">
    <property type="entry name" value="PRK06568.1"/>
    <property type="match status" value="1"/>
</dbReference>
<dbReference type="Pfam" id="PF00430">
    <property type="entry name" value="ATP-synt_B"/>
    <property type="match status" value="1"/>
</dbReference>
<feature type="chain" id="PRO_0000082385" description="ATP synthase subunit b">
    <location>
        <begin position="1"/>
        <end position="167"/>
    </location>
</feature>
<feature type="transmembrane region" description="Helical" evidence="1">
    <location>
        <begin position="7"/>
        <end position="25"/>
    </location>
</feature>
<evidence type="ECO:0000255" key="1">
    <source>
        <dbReference type="HAMAP-Rule" id="MF_01398"/>
    </source>
</evidence>
<comment type="function">
    <text evidence="1">F(1)F(0) ATP synthase produces ATP from ADP in the presence of a proton or sodium gradient. F-type ATPases consist of two structural domains, F(1) containing the extramembraneous catalytic core and F(0) containing the membrane proton channel, linked together by a central stalk and a peripheral stalk. During catalysis, ATP synthesis in the catalytic domain of F(1) is coupled via a rotary mechanism of the central stalk subunits to proton translocation.</text>
</comment>
<comment type="function">
    <text evidence="1">Component of the F(0) channel, it forms part of the peripheral stalk, linking F(1) to F(0).</text>
</comment>
<comment type="subunit">
    <text evidence="1">F-type ATPases have 2 components, F(1) - the catalytic core - and F(0) - the membrane proton channel. F(1) has five subunits: alpha(3), beta(3), gamma(1), delta(1), epsilon(1). F(0) has three main subunits: a(1), b(2) and c(10-14). The alpha and beta chains form an alternating ring which encloses part of the gamma chain. F(1) is attached to F(0) by a central stalk formed by the gamma and epsilon chains, while a peripheral stalk is formed by the delta and b chains.</text>
</comment>
<comment type="subcellular location">
    <subcellularLocation>
        <location evidence="1">Cell inner membrane</location>
        <topology evidence="1">Single-pass membrane protein</topology>
    </subcellularLocation>
</comment>
<comment type="similarity">
    <text evidence="1">Belongs to the ATPase B chain family.</text>
</comment>
<organism>
    <name type="scientific">Rickettsia prowazekii (strain Madrid E)</name>
    <dbReference type="NCBI Taxonomy" id="272947"/>
    <lineage>
        <taxon>Bacteria</taxon>
        <taxon>Pseudomonadati</taxon>
        <taxon>Pseudomonadota</taxon>
        <taxon>Alphaproteobacteria</taxon>
        <taxon>Rickettsiales</taxon>
        <taxon>Rickettsiaceae</taxon>
        <taxon>Rickettsieae</taxon>
        <taxon>Rickettsia</taxon>
        <taxon>typhus group</taxon>
    </lineage>
</organism>
<proteinExistence type="inferred from homology"/>
<keyword id="KW-0066">ATP synthesis</keyword>
<keyword id="KW-0997">Cell inner membrane</keyword>
<keyword id="KW-1003">Cell membrane</keyword>
<keyword id="KW-0138">CF(0)</keyword>
<keyword id="KW-0375">Hydrogen ion transport</keyword>
<keyword id="KW-0406">Ion transport</keyword>
<keyword id="KW-0472">Membrane</keyword>
<keyword id="KW-1185">Reference proteome</keyword>
<keyword id="KW-0812">Transmembrane</keyword>
<keyword id="KW-1133">Transmembrane helix</keyword>
<keyword id="KW-0813">Transport</keyword>
<gene>
    <name evidence="1" type="primary">atpF</name>
    <name type="ordered locus">RP020</name>
</gene>
<accession>Q9ZEC4</accession>